<accession>Q96KA5</accession>
<accession>D3DTC1</accession>
<accession>Q658W6</accession>
<accession>Q7LG29</accession>
<accession>Q96AZ0</accession>
<accession>Q9H3N4</accession>
<proteinExistence type="evidence at protein level"/>
<reference key="1">
    <citation type="journal article" date="2004" name="Nat. Genet.">
        <title>Complete sequencing and characterization of 21,243 full-length human cDNAs.</title>
        <authorList>
            <person name="Ota T."/>
            <person name="Suzuki Y."/>
            <person name="Nishikawa T."/>
            <person name="Otsuki T."/>
            <person name="Sugiyama T."/>
            <person name="Irie R."/>
            <person name="Wakamatsu A."/>
            <person name="Hayashi K."/>
            <person name="Sato H."/>
            <person name="Nagai K."/>
            <person name="Kimura K."/>
            <person name="Makita H."/>
            <person name="Sekine M."/>
            <person name="Obayashi M."/>
            <person name="Nishi T."/>
            <person name="Shibahara T."/>
            <person name="Tanaka T."/>
            <person name="Ishii S."/>
            <person name="Yamamoto J."/>
            <person name="Saito K."/>
            <person name="Kawai Y."/>
            <person name="Isono Y."/>
            <person name="Nakamura Y."/>
            <person name="Nagahari K."/>
            <person name="Murakami K."/>
            <person name="Yasuda T."/>
            <person name="Iwayanagi T."/>
            <person name="Wagatsuma M."/>
            <person name="Shiratori A."/>
            <person name="Sudo H."/>
            <person name="Hosoiri T."/>
            <person name="Kaku Y."/>
            <person name="Kodaira H."/>
            <person name="Kondo H."/>
            <person name="Sugawara M."/>
            <person name="Takahashi M."/>
            <person name="Kanda K."/>
            <person name="Yokoi T."/>
            <person name="Furuya T."/>
            <person name="Kikkawa E."/>
            <person name="Omura Y."/>
            <person name="Abe K."/>
            <person name="Kamihara K."/>
            <person name="Katsuta N."/>
            <person name="Sato K."/>
            <person name="Tanikawa M."/>
            <person name="Yamazaki M."/>
            <person name="Ninomiya K."/>
            <person name="Ishibashi T."/>
            <person name="Yamashita H."/>
            <person name="Murakawa K."/>
            <person name="Fujimori K."/>
            <person name="Tanai H."/>
            <person name="Kimata M."/>
            <person name="Watanabe M."/>
            <person name="Hiraoka S."/>
            <person name="Chiba Y."/>
            <person name="Ishida S."/>
            <person name="Ono Y."/>
            <person name="Takiguchi S."/>
            <person name="Watanabe S."/>
            <person name="Yosida M."/>
            <person name="Hotuta T."/>
            <person name="Kusano J."/>
            <person name="Kanehori K."/>
            <person name="Takahashi-Fujii A."/>
            <person name="Hara H."/>
            <person name="Tanase T.-O."/>
            <person name="Nomura Y."/>
            <person name="Togiya S."/>
            <person name="Komai F."/>
            <person name="Hara R."/>
            <person name="Takeuchi K."/>
            <person name="Arita M."/>
            <person name="Imose N."/>
            <person name="Musashino K."/>
            <person name="Yuuki H."/>
            <person name="Oshima A."/>
            <person name="Sasaki N."/>
            <person name="Aotsuka S."/>
            <person name="Yoshikawa Y."/>
            <person name="Matsunawa H."/>
            <person name="Ichihara T."/>
            <person name="Shiohata N."/>
            <person name="Sano S."/>
            <person name="Moriya S."/>
            <person name="Momiyama H."/>
            <person name="Satoh N."/>
            <person name="Takami S."/>
            <person name="Terashima Y."/>
            <person name="Suzuki O."/>
            <person name="Nakagawa S."/>
            <person name="Senoh A."/>
            <person name="Mizoguchi H."/>
            <person name="Goto Y."/>
            <person name="Shimizu F."/>
            <person name="Wakebe H."/>
            <person name="Hishigaki H."/>
            <person name="Watanabe T."/>
            <person name="Sugiyama A."/>
            <person name="Takemoto M."/>
            <person name="Kawakami B."/>
            <person name="Yamazaki M."/>
            <person name="Watanabe K."/>
            <person name="Kumagai A."/>
            <person name="Itakura S."/>
            <person name="Fukuzumi Y."/>
            <person name="Fujimori Y."/>
            <person name="Komiyama M."/>
            <person name="Tashiro H."/>
            <person name="Tanigami A."/>
            <person name="Fujiwara T."/>
            <person name="Ono T."/>
            <person name="Yamada K."/>
            <person name="Fujii Y."/>
            <person name="Ozaki K."/>
            <person name="Hirao M."/>
            <person name="Ohmori Y."/>
            <person name="Kawabata A."/>
            <person name="Hikiji T."/>
            <person name="Kobatake N."/>
            <person name="Inagaki H."/>
            <person name="Ikema Y."/>
            <person name="Okamoto S."/>
            <person name="Okitani R."/>
            <person name="Kawakami T."/>
            <person name="Noguchi S."/>
            <person name="Itoh T."/>
            <person name="Shigeta K."/>
            <person name="Senba T."/>
            <person name="Matsumura K."/>
            <person name="Nakajima Y."/>
            <person name="Mizuno T."/>
            <person name="Morinaga M."/>
            <person name="Sasaki M."/>
            <person name="Togashi T."/>
            <person name="Oyama M."/>
            <person name="Hata H."/>
            <person name="Watanabe M."/>
            <person name="Komatsu T."/>
            <person name="Mizushima-Sugano J."/>
            <person name="Satoh T."/>
            <person name="Shirai Y."/>
            <person name="Takahashi Y."/>
            <person name="Nakagawa K."/>
            <person name="Okumura K."/>
            <person name="Nagase T."/>
            <person name="Nomura N."/>
            <person name="Kikuchi H."/>
            <person name="Masuho Y."/>
            <person name="Yamashita R."/>
            <person name="Nakai K."/>
            <person name="Yada T."/>
            <person name="Nakamura Y."/>
            <person name="Ohara O."/>
            <person name="Isogai T."/>
            <person name="Sugano S."/>
        </authorList>
    </citation>
    <scope>NUCLEOTIDE SEQUENCE [LARGE SCALE MRNA] (ISOFORM 1)</scope>
    <source>
        <tissue>Embryo</tissue>
    </source>
</reference>
<reference key="2">
    <citation type="submission" date="2005-09" db="EMBL/GenBank/DDBJ databases">
        <authorList>
            <person name="Mural R.J."/>
            <person name="Istrail S."/>
            <person name="Sutton G.G."/>
            <person name="Florea L."/>
            <person name="Halpern A.L."/>
            <person name="Mobarry C.M."/>
            <person name="Lippert R."/>
            <person name="Walenz B."/>
            <person name="Shatkay H."/>
            <person name="Dew I."/>
            <person name="Miller J.R."/>
            <person name="Flanigan M.J."/>
            <person name="Edwards N.J."/>
            <person name="Bolanos R."/>
            <person name="Fasulo D."/>
            <person name="Halldorsson B.V."/>
            <person name="Hannenhalli S."/>
            <person name="Turner R."/>
            <person name="Yooseph S."/>
            <person name="Lu F."/>
            <person name="Nusskern D.R."/>
            <person name="Shue B.C."/>
            <person name="Zheng X.H."/>
            <person name="Zhong F."/>
            <person name="Delcher A.L."/>
            <person name="Huson D.H."/>
            <person name="Kravitz S.A."/>
            <person name="Mouchard L."/>
            <person name="Reinert K."/>
            <person name="Remington K.A."/>
            <person name="Clark A.G."/>
            <person name="Waterman M.S."/>
            <person name="Eichler E.E."/>
            <person name="Adams M.D."/>
            <person name="Hunkapiller M.W."/>
            <person name="Myers E.W."/>
            <person name="Venter J.C."/>
        </authorList>
    </citation>
    <scope>NUCLEOTIDE SEQUENCE [LARGE SCALE GENOMIC DNA]</scope>
</reference>
<reference key="3">
    <citation type="journal article" date="2004" name="Genome Res.">
        <title>The status, quality, and expansion of the NIH full-length cDNA project: the Mammalian Gene Collection (MGC).</title>
        <authorList>
            <consortium name="The MGC Project Team"/>
        </authorList>
    </citation>
    <scope>NUCLEOTIDE SEQUENCE [LARGE SCALE MRNA] (ISOFORM 1)</scope>
    <scope>NUCLEOTIDE SEQUENCE [LARGE SCALE MRNA] OF 130-538 (ISOFORM 2)</scope>
    <source>
        <tissue>Colon</tissue>
        <tissue>Ovary</tissue>
    </source>
</reference>
<reference key="4">
    <citation type="journal article" date="2001" name="Biochem. Biophys. Res. Commun.">
        <title>A novel gene, CRR9, which was up-regulated in CDDP-resistant ovarian tumor cell line, was associated with apoptosis.</title>
        <authorList>
            <person name="Yamamoto K."/>
            <person name="Okamoto A."/>
            <person name="Isonishi S."/>
            <person name="Ochiai K."/>
            <person name="Ohtake Y."/>
        </authorList>
    </citation>
    <scope>NUCLEOTIDE SEQUENCE [MRNA] OF 6-538 (ISOFORM 1)</scope>
    <scope>INDUCTION</scope>
</reference>
<reference key="5">
    <citation type="journal article" date="2007" name="BMC Genomics">
        <title>The full-ORF clone resource of the German cDNA consortium.</title>
        <authorList>
            <person name="Bechtel S."/>
            <person name="Rosenfelder H."/>
            <person name="Duda A."/>
            <person name="Schmidt C.P."/>
            <person name="Ernst U."/>
            <person name="Wellenreuther R."/>
            <person name="Mehrle A."/>
            <person name="Schuster C."/>
            <person name="Bahr A."/>
            <person name="Bloecker H."/>
            <person name="Heubner D."/>
            <person name="Hoerlein A."/>
            <person name="Michel G."/>
            <person name="Wedler H."/>
            <person name="Koehrer K."/>
            <person name="Ottenwaelder B."/>
            <person name="Poustka A."/>
            <person name="Wiemann S."/>
            <person name="Schupp I."/>
        </authorList>
    </citation>
    <scope>NUCLEOTIDE SEQUENCE [LARGE SCALE MRNA] OF 391-538 (ISOFORM 1)</scope>
    <source>
        <tissue>Stomach</tissue>
    </source>
</reference>
<reference key="6">
    <citation type="journal article" date="2009" name="J. Proteome Res.">
        <title>Glycoproteomics analysis of human liver tissue by combination of multiple enzyme digestion and hydrazide chemistry.</title>
        <authorList>
            <person name="Chen R."/>
            <person name="Jiang X."/>
            <person name="Sun D."/>
            <person name="Han G."/>
            <person name="Wang F."/>
            <person name="Ye M."/>
            <person name="Wang L."/>
            <person name="Zou H."/>
        </authorList>
    </citation>
    <scope>GLYCOSYLATION [LARGE SCALE ANALYSIS] AT ASN-229</scope>
    <source>
        <tissue>Liver</tissue>
    </source>
</reference>
<reference key="7">
    <citation type="journal article" date="2011" name="BMC Syst. Biol.">
        <title>Initial characterization of the human central proteome.</title>
        <authorList>
            <person name="Burkard T.R."/>
            <person name="Planyavsky M."/>
            <person name="Kaupe I."/>
            <person name="Breitwieser F.P."/>
            <person name="Buerckstuemmer T."/>
            <person name="Bennett K.L."/>
            <person name="Superti-Furga G."/>
            <person name="Colinge J."/>
        </authorList>
    </citation>
    <scope>IDENTIFICATION BY MASS SPECTROMETRY [LARGE SCALE ANALYSIS]</scope>
</reference>
<reference key="8">
    <citation type="journal article" date="2015" name="Proteomics">
        <title>N-terminome analysis of the human mitochondrial proteome.</title>
        <authorList>
            <person name="Vaca Jacome A.S."/>
            <person name="Rabilloud T."/>
            <person name="Schaeffer-Reiss C."/>
            <person name="Rompais M."/>
            <person name="Ayoub D."/>
            <person name="Lane L."/>
            <person name="Bairoch A."/>
            <person name="Van Dorsselaer A."/>
            <person name="Carapito C."/>
        </authorList>
    </citation>
    <scope>IDENTIFICATION BY MASS SPECTROMETRY [LARGE SCALE ANALYSIS]</scope>
</reference>
<reference key="9">
    <citation type="journal article" date="2022" name="Proc. Natl. Acad. Sci. U.S.A.">
        <title>Genome-wide CRISPR screen reveals CLPTM1L as a lipid scramblase required for efficient glycosylphosphatidylinositol biosynthesis.</title>
        <authorList>
            <person name="Wang Y."/>
            <person name="Menon A.K."/>
            <person name="Maki Y."/>
            <person name="Liu Y.S."/>
            <person name="Iwasaki Y."/>
            <person name="Fujita M."/>
            <person name="Guerrero P.A."/>
            <person name="Silva D.V."/>
            <person name="Seeberger P.H."/>
            <person name="Murakami Y."/>
            <person name="Kinoshita T."/>
        </authorList>
    </citation>
    <scope>FUNCTION</scope>
    <scope>CATALYTIC ACTIVITY</scope>
    <scope>SUBCELLULAR LOCATION</scope>
    <scope>TISSUE SPECIFICITY</scope>
</reference>
<reference key="10">
    <citation type="journal article" date="2006" name="Science">
        <title>The consensus coding sequences of human breast and colorectal cancers.</title>
        <authorList>
            <person name="Sjoeblom T."/>
            <person name="Jones S."/>
            <person name="Wood L.D."/>
            <person name="Parsons D.W."/>
            <person name="Lin J."/>
            <person name="Barber T.D."/>
            <person name="Mandelker D."/>
            <person name="Leary R.J."/>
            <person name="Ptak J."/>
            <person name="Silliman N."/>
            <person name="Szabo S."/>
            <person name="Buckhaults P."/>
            <person name="Farrell C."/>
            <person name="Meeh P."/>
            <person name="Markowitz S.D."/>
            <person name="Willis J."/>
            <person name="Dawson D."/>
            <person name="Willson J.K.V."/>
            <person name="Gazdar A.F."/>
            <person name="Hartigan J."/>
            <person name="Wu L."/>
            <person name="Liu C."/>
            <person name="Parmigiani G."/>
            <person name="Park B.H."/>
            <person name="Bachman K.E."/>
            <person name="Papadopoulos N."/>
            <person name="Vogelstein B."/>
            <person name="Kinzler K.W."/>
            <person name="Velculescu V.E."/>
        </authorList>
    </citation>
    <scope>VARIANT [LARGE SCALE ANALYSIS] ASN-313</scope>
</reference>
<gene>
    <name type="primary">CLPTM1L</name>
    <name type="synonym">CRR9</name>
</gene>
<organism>
    <name type="scientific">Homo sapiens</name>
    <name type="common">Human</name>
    <dbReference type="NCBI Taxonomy" id="9606"/>
    <lineage>
        <taxon>Eukaryota</taxon>
        <taxon>Metazoa</taxon>
        <taxon>Chordata</taxon>
        <taxon>Craniata</taxon>
        <taxon>Vertebrata</taxon>
        <taxon>Euteleostomi</taxon>
        <taxon>Mammalia</taxon>
        <taxon>Eutheria</taxon>
        <taxon>Euarchontoglires</taxon>
        <taxon>Primates</taxon>
        <taxon>Haplorrhini</taxon>
        <taxon>Catarrhini</taxon>
        <taxon>Hominidae</taxon>
        <taxon>Homo</taxon>
    </lineage>
</organism>
<evidence type="ECO:0000255" key="1"/>
<evidence type="ECO:0000269" key="2">
    <source>
    </source>
</evidence>
<evidence type="ECO:0000269" key="3">
    <source>
    </source>
</evidence>
<evidence type="ECO:0000269" key="4">
    <source>
    </source>
</evidence>
<evidence type="ECO:0000269" key="5">
    <source>
    </source>
</evidence>
<evidence type="ECO:0000303" key="6">
    <source>
    </source>
</evidence>
<evidence type="ECO:0000303" key="7">
    <source>
    </source>
</evidence>
<evidence type="ECO:0000305" key="8"/>
<evidence type="ECO:0000305" key="9">
    <source>
    </source>
</evidence>
<comment type="function">
    <text evidence="5">Scramblase that mediates the translocation of glucosaminylphosphatidylinositol (alpha-D-GlcN-(1-6)-(1,2-diacyl-sn-glycero-3-phospho)-1D-myo-inositol, GlcN-PI) across the endoplasmic reticulum (ER) membrane, from the cytosolic leaflet to the luminal leaflet of the ER membrane, where it participates in the biosynthesis of glycosylphosphatidylinositol (GPI) (PubMed:35344438). GPI is a lipid glycoconjugate involved in post-translational modification of proteins (PubMed:35344438). Can also translocate 1,2-diacyl-sn-glycero-3-phospho-(1D-myo-inositol) (phosphatidylinositol or PI), as well as several other phospholipids (1,2-diacyl-sn-glycero-3-phosphocholine, 1,2-diacyl-sn-glycero-3-phosphoethanolamine), and N-acetylglucosaminylphosphatidylinositol (GlcNAc-PI) in vitro (PubMed:35344438).</text>
</comment>
<comment type="catalytic activity">
    <reaction evidence="5">
        <text>a 6-(alpha-D-glucosaminyl)-1-(1,2-diacyl-sn-glycero-3-phospho)-1D-myo-inositol(in) = a 6-(alpha-D-glucosaminyl)-1-(1,2-diacyl-sn-glycero-3-phospho)-1D-myo-inositol(out)</text>
        <dbReference type="Rhea" id="RHEA:71491"/>
        <dbReference type="ChEBI" id="CHEBI:57997"/>
    </reaction>
</comment>
<comment type="catalytic activity">
    <reaction evidence="5">
        <text>6-(alpha-D-glucosaminyl)-(1-octadecanoyl,2-(9Z)-octadecenoyl-sn-glycero-3-phospho)-1D-myo-inositol(in) = 6-(alpha-D-glucosaminyl)-(1-octadecanoyl,2-(9Z)-octadecenoyl-sn-glycero-3-phospho)-1D-myo-inositol(out)</text>
        <dbReference type="Rhea" id="RHEA:71495"/>
        <dbReference type="ChEBI" id="CHEBI:190691"/>
    </reaction>
</comment>
<comment type="catalytic activity">
    <reaction evidence="5">
        <text>a 1,2-diacyl-sn-glycero-3-phospho-(1D-myo-inositol)(in) = a 1,2-diacyl-sn-glycero-3-phospho-(1D-myo-inositol)(out)</text>
        <dbReference type="Rhea" id="RHEA:38691"/>
        <dbReference type="ChEBI" id="CHEBI:57880"/>
    </reaction>
</comment>
<comment type="catalytic activity">
    <reaction evidence="5">
        <text>a 1,2-diacyl-sn-glycero-3-phosphocholine(in) = a 1,2-diacyl-sn-glycero-3-phosphocholine(out)</text>
        <dbReference type="Rhea" id="RHEA:38571"/>
        <dbReference type="ChEBI" id="CHEBI:57643"/>
    </reaction>
</comment>
<comment type="catalytic activity">
    <reaction evidence="5">
        <text>a 1,2-diacyl-sn-glycero-3-phosphoethanolamine(in) = a 1,2-diacyl-sn-glycero-3-phosphoethanolamine(out)</text>
        <dbReference type="Rhea" id="RHEA:38895"/>
        <dbReference type="ChEBI" id="CHEBI:64612"/>
    </reaction>
</comment>
<comment type="interaction">
    <interactant intactId="EBI-3216282">
        <id>Q96KA5</id>
    </interactant>
    <interactant intactId="EBI-6918743">
        <id>Q9H3M0</id>
        <label>KCNF1</label>
    </interactant>
    <organismsDiffer>false</organismsDiffer>
    <experiments>3</experiments>
</comment>
<comment type="subcellular location">
    <subcellularLocation>
        <location evidence="5">Endoplasmic reticulum membrane</location>
        <topology evidence="1">Multi-pass membrane protein</topology>
    </subcellularLocation>
</comment>
<comment type="alternative products">
    <event type="alternative splicing"/>
    <isoform>
        <id>Q96KA5-1</id>
        <name>1</name>
        <sequence type="displayed"/>
    </isoform>
    <isoform>
        <id>Q96KA5-2</id>
        <name>2</name>
        <sequence type="described" ref="VSP_033157"/>
    </isoform>
</comment>
<comment type="tissue specificity">
    <text evidence="5">Ubiquitously expressed.</text>
</comment>
<comment type="induction">
    <text evidence="2">Up-regulated by cisplatin.</text>
</comment>
<comment type="similarity">
    <text evidence="8">Belongs to the CLPTM1 family.</text>
</comment>
<comment type="sequence caution" evidence="8">
    <conflict type="erroneous initiation">
        <sequence resource="EMBL-CDS" id="BAB20083"/>
    </conflict>
</comment>
<dbReference type="EMBL" id="AK027306">
    <property type="protein sequence ID" value="BAB55030.1"/>
    <property type="molecule type" value="mRNA"/>
</dbReference>
<dbReference type="EMBL" id="CH471102">
    <property type="protein sequence ID" value="EAX08162.1"/>
    <property type="molecule type" value="Genomic_DNA"/>
</dbReference>
<dbReference type="EMBL" id="CH471102">
    <property type="protein sequence ID" value="EAX08163.1"/>
    <property type="molecule type" value="Genomic_DNA"/>
</dbReference>
<dbReference type="EMBL" id="BC016399">
    <property type="protein sequence ID" value="AAH16399.1"/>
    <property type="molecule type" value="mRNA"/>
</dbReference>
<dbReference type="EMBL" id="BC025305">
    <property type="protein sequence ID" value="AAH25305.1"/>
    <property type="molecule type" value="mRNA"/>
</dbReference>
<dbReference type="EMBL" id="AB045223">
    <property type="protein sequence ID" value="BAB20083.1"/>
    <property type="status" value="ALT_INIT"/>
    <property type="molecule type" value="mRNA"/>
</dbReference>
<dbReference type="EMBL" id="AL832953">
    <property type="protein sequence ID" value="CAH56333.1"/>
    <property type="molecule type" value="mRNA"/>
</dbReference>
<dbReference type="CCDS" id="CCDS3862.1">
    <molecule id="Q96KA5-1"/>
</dbReference>
<dbReference type="PIR" id="JC7599">
    <property type="entry name" value="JC7599"/>
</dbReference>
<dbReference type="RefSeq" id="NP_110409.2">
    <molecule id="Q96KA5-1"/>
    <property type="nucleotide sequence ID" value="NM_030782.4"/>
</dbReference>
<dbReference type="BioGRID" id="123354">
    <property type="interactions" value="143"/>
</dbReference>
<dbReference type="FunCoup" id="Q96KA5">
    <property type="interactions" value="1965"/>
</dbReference>
<dbReference type="IntAct" id="Q96KA5">
    <property type="interactions" value="58"/>
</dbReference>
<dbReference type="MINT" id="Q96KA5"/>
<dbReference type="STRING" id="9606.ENSP00000313854"/>
<dbReference type="TCDB" id="8.A.125.1.5">
    <property type="family name" value="the cleft lip and palate transmembrane protein 1 (clptm1) family"/>
</dbReference>
<dbReference type="GlyConnect" id="1117">
    <property type="glycosylation" value="8 N-Linked glycans (2 sites)"/>
</dbReference>
<dbReference type="GlyCosmos" id="Q96KA5">
    <property type="glycosylation" value="4 sites, 9 glycans"/>
</dbReference>
<dbReference type="GlyGen" id="Q96KA5">
    <property type="glycosylation" value="4 sites, 23 N-linked glycans (3 sites), 1 O-linked glycan (1 site)"/>
</dbReference>
<dbReference type="iPTMnet" id="Q96KA5"/>
<dbReference type="MetOSite" id="Q96KA5"/>
<dbReference type="PhosphoSitePlus" id="Q96KA5"/>
<dbReference type="SwissPalm" id="Q96KA5"/>
<dbReference type="BioMuta" id="CLPTM1L"/>
<dbReference type="DMDM" id="74732209"/>
<dbReference type="jPOST" id="Q96KA5"/>
<dbReference type="MassIVE" id="Q96KA5"/>
<dbReference type="PaxDb" id="9606-ENSP00000313854"/>
<dbReference type="PeptideAtlas" id="Q96KA5"/>
<dbReference type="ProteomicsDB" id="77054">
    <molecule id="Q96KA5-1"/>
</dbReference>
<dbReference type="ProteomicsDB" id="77055">
    <molecule id="Q96KA5-2"/>
</dbReference>
<dbReference type="Pumba" id="Q96KA5"/>
<dbReference type="Antibodypedia" id="3079">
    <property type="antibodies" value="206 antibodies from 23 providers"/>
</dbReference>
<dbReference type="DNASU" id="81037"/>
<dbReference type="Ensembl" id="ENST00000320895.10">
    <molecule id="Q96KA5-1"/>
    <property type="protein sequence ID" value="ENSP00000313854.5"/>
    <property type="gene ID" value="ENSG00000049656.14"/>
</dbReference>
<dbReference type="Ensembl" id="ENST00000620010.3">
    <molecule id="Q96KA5-1"/>
    <property type="protein sequence ID" value="ENSP00000480372.1"/>
    <property type="gene ID" value="ENSG00000274811.3"/>
</dbReference>
<dbReference type="GeneID" id="81037"/>
<dbReference type="KEGG" id="hsa:81037"/>
<dbReference type="MANE-Select" id="ENST00000320895.10">
    <property type="protein sequence ID" value="ENSP00000313854.5"/>
    <property type="RefSeq nucleotide sequence ID" value="NM_030782.5"/>
    <property type="RefSeq protein sequence ID" value="NP_110409.2"/>
</dbReference>
<dbReference type="UCSC" id="uc003jch.4">
    <molecule id="Q96KA5-1"/>
    <property type="organism name" value="human"/>
</dbReference>
<dbReference type="AGR" id="HGNC:24308"/>
<dbReference type="CTD" id="81037"/>
<dbReference type="DisGeNET" id="81037"/>
<dbReference type="GeneCards" id="CLPTM1L"/>
<dbReference type="HGNC" id="HGNC:24308">
    <property type="gene designation" value="CLPTM1L"/>
</dbReference>
<dbReference type="HPA" id="ENSG00000049656">
    <property type="expression patterns" value="Low tissue specificity"/>
</dbReference>
<dbReference type="MalaCards" id="CLPTM1L"/>
<dbReference type="MIM" id="612585">
    <property type="type" value="gene"/>
</dbReference>
<dbReference type="neXtProt" id="NX_Q96KA5"/>
<dbReference type="OpenTargets" id="ENSG00000049656"/>
<dbReference type="PharmGKB" id="PA147358156"/>
<dbReference type="VEuPathDB" id="HostDB:ENSG00000049656"/>
<dbReference type="eggNOG" id="KOG2489">
    <property type="taxonomic scope" value="Eukaryota"/>
</dbReference>
<dbReference type="GeneTree" id="ENSGT00530000063461"/>
<dbReference type="HOGENOM" id="CLU_019907_4_1_1"/>
<dbReference type="InParanoid" id="Q96KA5"/>
<dbReference type="OMA" id="TTMWRAF"/>
<dbReference type="OrthoDB" id="378564at2759"/>
<dbReference type="PAN-GO" id="Q96KA5">
    <property type="GO annotations" value="1 GO annotation based on evolutionary models"/>
</dbReference>
<dbReference type="PhylomeDB" id="Q96KA5"/>
<dbReference type="TreeFam" id="TF318501"/>
<dbReference type="PathwayCommons" id="Q96KA5"/>
<dbReference type="SignaLink" id="Q96KA5"/>
<dbReference type="BioGRID-ORCS" id="81037">
    <property type="hits" value="8 hits in 1149 CRISPR screens"/>
</dbReference>
<dbReference type="ChiTaRS" id="CLPTM1L">
    <property type="organism name" value="human"/>
</dbReference>
<dbReference type="GeneWiki" id="CLPTM1L"/>
<dbReference type="GenomeRNAi" id="81037"/>
<dbReference type="Pharos" id="Q96KA5">
    <property type="development level" value="Tbio"/>
</dbReference>
<dbReference type="PRO" id="PR:Q96KA5"/>
<dbReference type="Proteomes" id="UP000005640">
    <property type="component" value="Chromosome 5"/>
</dbReference>
<dbReference type="RNAct" id="Q96KA5">
    <property type="molecule type" value="protein"/>
</dbReference>
<dbReference type="Bgee" id="ENSG00000049656">
    <property type="expression patterns" value="Expressed in ileal mucosa and 181 other cell types or tissues"/>
</dbReference>
<dbReference type="ExpressionAtlas" id="Q96KA5">
    <property type="expression patterns" value="baseline and differential"/>
</dbReference>
<dbReference type="GO" id="GO:0012505">
    <property type="term" value="C:endomembrane system"/>
    <property type="evidence" value="ECO:0000318"/>
    <property type="project" value="GO_Central"/>
</dbReference>
<dbReference type="GO" id="GO:0005783">
    <property type="term" value="C:endoplasmic reticulum"/>
    <property type="evidence" value="ECO:0000314"/>
    <property type="project" value="HPA"/>
</dbReference>
<dbReference type="GO" id="GO:0005789">
    <property type="term" value="C:endoplasmic reticulum membrane"/>
    <property type="evidence" value="ECO:0000314"/>
    <property type="project" value="UniProtKB"/>
</dbReference>
<dbReference type="GO" id="GO:0016020">
    <property type="term" value="C:membrane"/>
    <property type="evidence" value="ECO:0007005"/>
    <property type="project" value="UniProtKB"/>
</dbReference>
<dbReference type="GO" id="GO:0017128">
    <property type="term" value="F:phospholipid scramblase activity"/>
    <property type="evidence" value="ECO:0000314"/>
    <property type="project" value="UniProtKB"/>
</dbReference>
<dbReference type="GO" id="GO:0006915">
    <property type="term" value="P:apoptotic process"/>
    <property type="evidence" value="ECO:0007669"/>
    <property type="project" value="UniProtKB-KW"/>
</dbReference>
<dbReference type="InterPro" id="IPR008429">
    <property type="entry name" value="CLPTM1"/>
</dbReference>
<dbReference type="PANTHER" id="PTHR21347">
    <property type="entry name" value="CLEFT LIP AND PALATE ASSOCIATED TRANSMEMBRANE PROTEIN-RELATED"/>
    <property type="match status" value="1"/>
</dbReference>
<dbReference type="PANTHER" id="PTHR21347:SF0">
    <property type="entry name" value="LIPID SCRAMBLASE CLPTM1L"/>
    <property type="match status" value="1"/>
</dbReference>
<dbReference type="Pfam" id="PF05602">
    <property type="entry name" value="CLPTM1"/>
    <property type="match status" value="1"/>
</dbReference>
<feature type="chain" id="PRO_0000331300" description="Lipid scramblase CLPTM1L">
    <location>
        <begin position="1"/>
        <end position="538"/>
    </location>
</feature>
<feature type="topological domain" description="Cytoplasmic" evidence="1">
    <location>
        <begin position="1"/>
        <end position="10"/>
    </location>
</feature>
<feature type="transmembrane region" description="Helical" evidence="1">
    <location>
        <begin position="11"/>
        <end position="31"/>
    </location>
</feature>
<feature type="topological domain" description="Extracellular" evidence="1">
    <location>
        <begin position="32"/>
        <end position="284"/>
    </location>
</feature>
<feature type="transmembrane region" description="Helical" evidence="1">
    <location>
        <begin position="285"/>
        <end position="305"/>
    </location>
</feature>
<feature type="topological domain" description="Cytoplasmic" evidence="1">
    <location>
        <begin position="306"/>
        <end position="324"/>
    </location>
</feature>
<feature type="transmembrane region" description="Helical" evidence="1">
    <location>
        <begin position="325"/>
        <end position="342"/>
    </location>
</feature>
<feature type="topological domain" description="Extracellular" evidence="1">
    <location>
        <begin position="343"/>
        <end position="346"/>
    </location>
</feature>
<feature type="transmembrane region" description="Helical" evidence="1">
    <location>
        <begin position="347"/>
        <end position="364"/>
    </location>
</feature>
<feature type="topological domain" description="Cytoplasmic" evidence="1">
    <location>
        <begin position="365"/>
        <end position="402"/>
    </location>
</feature>
<feature type="transmembrane region" description="Helical" evidence="1">
    <location>
        <begin position="403"/>
        <end position="423"/>
    </location>
</feature>
<feature type="topological domain" description="Extracellular" evidence="1">
    <location>
        <begin position="424"/>
        <end position="428"/>
    </location>
</feature>
<feature type="transmembrane region" description="Helical" evidence="1">
    <location>
        <begin position="429"/>
        <end position="449"/>
    </location>
</feature>
<feature type="topological domain" description="Cytoplasmic" evidence="1">
    <location>
        <begin position="450"/>
        <end position="538"/>
    </location>
</feature>
<feature type="glycosylation site" description="N-linked (GlcNAc...) asparagine" evidence="1">
    <location>
        <position position="91"/>
    </location>
</feature>
<feature type="glycosylation site" description="N-linked (GlcNAc...) asparagine" evidence="1">
    <location>
        <position position="101"/>
    </location>
</feature>
<feature type="glycosylation site" description="N-linked (GlcNAc...) asparagine" evidence="4">
    <location>
        <position position="229"/>
    </location>
</feature>
<feature type="splice variant" id="VSP_033157" description="In isoform 2." evidence="6">
    <location>
        <begin position="325"/>
        <end position="360"/>
    </location>
</feature>
<feature type="sequence variant" id="VAR_042754" description="In a breast cancer sample; somatic mutation." evidence="3">
    <original>K</original>
    <variation>N</variation>
    <location>
        <position position="313"/>
    </location>
</feature>
<feature type="sequence variant" id="VAR_042755" description="In dbSNP:rs33955038.">
    <original>T</original>
    <variation>M</variation>
    <location>
        <position position="537"/>
    </location>
</feature>
<name>CLP1L_HUMAN</name>
<sequence length="538" mass="62229">MWSGRSSFTSLVVGVFVVYVVHTCWVMYGIVYTRPCSGDANCIQPYLARRPKLQLSVYTTTRSHLGAENNIDLVLNVEDFDVESKFERTVNVSVPKKTRNNGTLYAYIFLHHAGVLPWHDGKQVHLVSPLTTYMVPKPEEINLLTGESDTQQIEAEKKPTSALDEPVSHWRPRLALNVMADNFVFDGSSLPADVHRYMKMIQLGKTVHYLPILFIDQLSNRVKDLMVINRSTTELPLTVSYDKVSLGRLRFWIHMQDAVYSLQQFGFSEKDADEVKGIFVDTNLYFLALTFFVAAFHLLFDFLAFKNDISFWKKKKSMIGMSTKAVLWRCFSTVVIFLFLLDEQTSLLVLVPAGVGAAIELWKVKKALKMTIFWRGLMPEFQFGTYSESERKTEEYDTQAMKYLSYLLYPLCVGGAVYSLLNIKYKSWYSWLINSFVNGVYAFGFLFMLPQLFVNYKLKSVAHLPWKAFTYKAFNTFIDDVFAFIITMPTSHRLACFRDDVVFLVYLYQRWLYPVDKRRVNEFGESYEEKATRAPHTD</sequence>
<keyword id="KW-0025">Alternative splicing</keyword>
<keyword id="KW-0053">Apoptosis</keyword>
<keyword id="KW-0256">Endoplasmic reticulum</keyword>
<keyword id="KW-0325">Glycoprotein</keyword>
<keyword id="KW-0445">Lipid transport</keyword>
<keyword id="KW-0472">Membrane</keyword>
<keyword id="KW-1267">Proteomics identification</keyword>
<keyword id="KW-1185">Reference proteome</keyword>
<keyword id="KW-0812">Transmembrane</keyword>
<keyword id="KW-1133">Transmembrane helix</keyword>
<keyword id="KW-0813">Transport</keyword>
<protein>
    <recommendedName>
        <fullName evidence="9">Lipid scramblase CLPTM1L</fullName>
    </recommendedName>
    <alternativeName>
        <fullName evidence="7">Cisplatin resistance-related protein 9</fullName>
        <shortName>CRR9p</shortName>
    </alternativeName>
    <alternativeName>
        <fullName>Cleft lip and palate transmembrane protein 1-like protein</fullName>
        <shortName>CLPTM1-like protein</shortName>
    </alternativeName>
</protein>